<gene>
    <name evidence="1" type="primary">coaX</name>
    <name type="ordered locus">ERGA_CDS_01740</name>
</gene>
<accession>Q5FFD0</accession>
<reference key="1">
    <citation type="journal article" date="2006" name="J. Bacteriol.">
        <title>Comparative genomic analysis of three strains of Ehrlichia ruminantium reveals an active process of genome size plasticity.</title>
        <authorList>
            <person name="Frutos R."/>
            <person name="Viari A."/>
            <person name="Ferraz C."/>
            <person name="Morgat A."/>
            <person name="Eychenie S."/>
            <person name="Kandassamy Y."/>
            <person name="Chantal I."/>
            <person name="Bensaid A."/>
            <person name="Coissac E."/>
            <person name="Vachiery N."/>
            <person name="Demaille J."/>
            <person name="Martinez D."/>
        </authorList>
    </citation>
    <scope>NUCLEOTIDE SEQUENCE [LARGE SCALE GENOMIC DNA]</scope>
    <source>
        <strain>Gardel</strain>
    </source>
</reference>
<name>COAX_EHRRG</name>
<proteinExistence type="inferred from homology"/>
<comment type="function">
    <text evidence="1">Catalyzes the phosphorylation of pantothenate (Pan), the first step in CoA biosynthesis.</text>
</comment>
<comment type="catalytic activity">
    <reaction evidence="1">
        <text>(R)-pantothenate + ATP = (R)-4'-phosphopantothenate + ADP + H(+)</text>
        <dbReference type="Rhea" id="RHEA:16373"/>
        <dbReference type="ChEBI" id="CHEBI:10986"/>
        <dbReference type="ChEBI" id="CHEBI:15378"/>
        <dbReference type="ChEBI" id="CHEBI:29032"/>
        <dbReference type="ChEBI" id="CHEBI:30616"/>
        <dbReference type="ChEBI" id="CHEBI:456216"/>
        <dbReference type="EC" id="2.7.1.33"/>
    </reaction>
</comment>
<comment type="cofactor">
    <cofactor evidence="1">
        <name>NH4(+)</name>
        <dbReference type="ChEBI" id="CHEBI:28938"/>
    </cofactor>
    <cofactor evidence="1">
        <name>K(+)</name>
        <dbReference type="ChEBI" id="CHEBI:29103"/>
    </cofactor>
    <text evidence="1">A monovalent cation. Ammonium or potassium.</text>
</comment>
<comment type="pathway">
    <text evidence="1">Cofactor biosynthesis; coenzyme A biosynthesis; CoA from (R)-pantothenate: step 1/5.</text>
</comment>
<comment type="subunit">
    <text evidence="1">Homodimer.</text>
</comment>
<comment type="subcellular location">
    <subcellularLocation>
        <location evidence="1">Cytoplasm</location>
    </subcellularLocation>
</comment>
<comment type="similarity">
    <text evidence="1">Belongs to the type III pantothenate kinase family.</text>
</comment>
<dbReference type="EC" id="2.7.1.33" evidence="1"/>
<dbReference type="EMBL" id="CR925677">
    <property type="protein sequence ID" value="CAI27626.1"/>
    <property type="molecule type" value="Genomic_DNA"/>
</dbReference>
<dbReference type="RefSeq" id="WP_011255352.1">
    <property type="nucleotide sequence ID" value="NC_006831.1"/>
</dbReference>
<dbReference type="SMR" id="Q5FFD0"/>
<dbReference type="KEGG" id="erg:ERGA_CDS_01740"/>
<dbReference type="HOGENOM" id="CLU_066627_1_0_5"/>
<dbReference type="OrthoDB" id="9804707at2"/>
<dbReference type="UniPathway" id="UPA00241">
    <property type="reaction ID" value="UER00352"/>
</dbReference>
<dbReference type="Proteomes" id="UP000000533">
    <property type="component" value="Chromosome"/>
</dbReference>
<dbReference type="GO" id="GO:0005737">
    <property type="term" value="C:cytoplasm"/>
    <property type="evidence" value="ECO:0007669"/>
    <property type="project" value="UniProtKB-SubCell"/>
</dbReference>
<dbReference type="GO" id="GO:0005524">
    <property type="term" value="F:ATP binding"/>
    <property type="evidence" value="ECO:0007669"/>
    <property type="project" value="UniProtKB-UniRule"/>
</dbReference>
<dbReference type="GO" id="GO:0004594">
    <property type="term" value="F:pantothenate kinase activity"/>
    <property type="evidence" value="ECO:0007669"/>
    <property type="project" value="UniProtKB-UniRule"/>
</dbReference>
<dbReference type="GO" id="GO:0015937">
    <property type="term" value="P:coenzyme A biosynthetic process"/>
    <property type="evidence" value="ECO:0007669"/>
    <property type="project" value="UniProtKB-UniRule"/>
</dbReference>
<dbReference type="CDD" id="cd24015">
    <property type="entry name" value="ASKHA_NBD_PanK-III"/>
    <property type="match status" value="1"/>
</dbReference>
<dbReference type="Gene3D" id="3.30.420.40">
    <property type="match status" value="2"/>
</dbReference>
<dbReference type="HAMAP" id="MF_01274">
    <property type="entry name" value="Pantothen_kinase_3"/>
    <property type="match status" value="1"/>
</dbReference>
<dbReference type="InterPro" id="IPR043129">
    <property type="entry name" value="ATPase_NBD"/>
</dbReference>
<dbReference type="InterPro" id="IPR004619">
    <property type="entry name" value="Type_III_PanK"/>
</dbReference>
<dbReference type="NCBIfam" id="TIGR00671">
    <property type="entry name" value="baf"/>
    <property type="match status" value="1"/>
</dbReference>
<dbReference type="NCBIfam" id="NF009848">
    <property type="entry name" value="PRK13318.1-6"/>
    <property type="match status" value="1"/>
</dbReference>
<dbReference type="PANTHER" id="PTHR34265">
    <property type="entry name" value="TYPE III PANTOTHENATE KINASE"/>
    <property type="match status" value="1"/>
</dbReference>
<dbReference type="PANTHER" id="PTHR34265:SF1">
    <property type="entry name" value="TYPE III PANTOTHENATE KINASE"/>
    <property type="match status" value="1"/>
</dbReference>
<dbReference type="Pfam" id="PF03309">
    <property type="entry name" value="Pan_kinase"/>
    <property type="match status" value="1"/>
</dbReference>
<dbReference type="SUPFAM" id="SSF53067">
    <property type="entry name" value="Actin-like ATPase domain"/>
    <property type="match status" value="2"/>
</dbReference>
<evidence type="ECO:0000255" key="1">
    <source>
        <dbReference type="HAMAP-Rule" id="MF_01274"/>
    </source>
</evidence>
<keyword id="KW-0067">ATP-binding</keyword>
<keyword id="KW-0173">Coenzyme A biosynthesis</keyword>
<keyword id="KW-0963">Cytoplasm</keyword>
<keyword id="KW-0418">Kinase</keyword>
<keyword id="KW-0547">Nucleotide-binding</keyword>
<keyword id="KW-0630">Potassium</keyword>
<keyword id="KW-0808">Transferase</keyword>
<protein>
    <recommendedName>
        <fullName evidence="1">Type III pantothenate kinase</fullName>
        <ecNumber evidence="1">2.7.1.33</ecNumber>
    </recommendedName>
    <alternativeName>
        <fullName evidence="1">PanK-III</fullName>
    </alternativeName>
    <alternativeName>
        <fullName evidence="1">Pantothenic acid kinase</fullName>
    </alternativeName>
</protein>
<organism>
    <name type="scientific">Ehrlichia ruminantium (strain Gardel)</name>
    <dbReference type="NCBI Taxonomy" id="302409"/>
    <lineage>
        <taxon>Bacteria</taxon>
        <taxon>Pseudomonadati</taxon>
        <taxon>Pseudomonadota</taxon>
        <taxon>Alphaproteobacteria</taxon>
        <taxon>Rickettsiales</taxon>
        <taxon>Anaplasmataceae</taxon>
        <taxon>Ehrlichia</taxon>
    </lineage>
</organism>
<sequence length="257" mass="29040">MLIIDIGNTNIKFGICINNQIIQTLRISSQPRRTADEYFFFLNTMRNQLNTNNFTITHIIISSVVPSITKPMIELSTHYFNITPTIINNQHADICNIKIDLNDKLLGSDRLASIIGAVTLYPNKNLLVISMGTATVFNLISKERSIYGQVITPGAHIMAQSMRQHTALLPEISQIKVNKVVHNTLFYAIEAGVYWGYIAMVEGIVKQILHEENKDLHIVATGGNSILFIDHKNFIKNIDPDLTMKGMIYLHNMLFNK</sequence>
<feature type="chain" id="PRO_0000267527" description="Type III pantothenate kinase">
    <location>
        <begin position="1"/>
        <end position="257"/>
    </location>
</feature>
<feature type="active site" description="Proton acceptor" evidence="1">
    <location>
        <position position="109"/>
    </location>
</feature>
<feature type="binding site" evidence="1">
    <location>
        <begin position="5"/>
        <end position="12"/>
    </location>
    <ligand>
        <name>ATP</name>
        <dbReference type="ChEBI" id="CHEBI:30616"/>
    </ligand>
</feature>
<feature type="binding site" evidence="1">
    <location>
        <begin position="107"/>
        <end position="110"/>
    </location>
    <ligand>
        <name>substrate</name>
    </ligand>
</feature>
<feature type="binding site" evidence="1">
    <location>
        <position position="133"/>
    </location>
    <ligand>
        <name>ATP</name>
        <dbReference type="ChEBI" id="CHEBI:30616"/>
    </ligand>
</feature>